<name>Y349_MYCGE</name>
<organism>
    <name type="scientific">Mycoplasma genitalium (strain ATCC 33530 / DSM 19775 / NCTC 10195 / G37)</name>
    <name type="common">Mycoplasmoides genitalium</name>
    <dbReference type="NCBI Taxonomy" id="243273"/>
    <lineage>
        <taxon>Bacteria</taxon>
        <taxon>Bacillati</taxon>
        <taxon>Mycoplasmatota</taxon>
        <taxon>Mycoplasmoidales</taxon>
        <taxon>Mycoplasmoidaceae</taxon>
        <taxon>Mycoplasmoides</taxon>
    </lineage>
</organism>
<proteinExistence type="predicted"/>
<gene>
    <name type="ordered locus">MG349</name>
</gene>
<reference key="1">
    <citation type="journal article" date="1995" name="Science">
        <title>The minimal gene complement of Mycoplasma genitalium.</title>
        <authorList>
            <person name="Fraser C.M."/>
            <person name="Gocayne J.D."/>
            <person name="White O."/>
            <person name="Adams M.D."/>
            <person name="Clayton R.A."/>
            <person name="Fleischmann R.D."/>
            <person name="Bult C.J."/>
            <person name="Kerlavage A.R."/>
            <person name="Sutton G.G."/>
            <person name="Kelley J.M."/>
            <person name="Fritchman J.L."/>
            <person name="Weidman J.F."/>
            <person name="Small K.V."/>
            <person name="Sandusky M."/>
            <person name="Fuhrmann J.L."/>
            <person name="Nguyen D.T."/>
            <person name="Utterback T.R."/>
            <person name="Saudek D.M."/>
            <person name="Phillips C.A."/>
            <person name="Merrick J.M."/>
            <person name="Tomb J.-F."/>
            <person name="Dougherty B.A."/>
            <person name="Bott K.F."/>
            <person name="Hu P.-C."/>
            <person name="Lucier T.S."/>
            <person name="Peterson S.N."/>
            <person name="Smith H.O."/>
            <person name="Hutchison C.A. III"/>
            <person name="Venter J.C."/>
        </authorList>
    </citation>
    <scope>NUCLEOTIDE SEQUENCE [LARGE SCALE GENOMIC DNA]</scope>
    <source>
        <strain>ATCC 33530 / DSM 19775 / NCTC 10195 / G37</strain>
    </source>
</reference>
<accession>P47591</accession>
<dbReference type="EMBL" id="L43967">
    <property type="protein sequence ID" value="AAC71574.1"/>
    <property type="molecule type" value="Genomic_DNA"/>
</dbReference>
<dbReference type="PIR" id="F64238">
    <property type="entry name" value="F64238"/>
</dbReference>
<dbReference type="SMR" id="P47591"/>
<dbReference type="STRING" id="243273.MG_349"/>
<dbReference type="KEGG" id="mge:MG_349"/>
<dbReference type="eggNOG" id="COG3611">
    <property type="taxonomic scope" value="Bacteria"/>
</dbReference>
<dbReference type="HOGENOM" id="CLU_681179_0_0_14"/>
<dbReference type="InParanoid" id="P47591"/>
<dbReference type="Proteomes" id="UP000000807">
    <property type="component" value="Chromosome"/>
</dbReference>
<sequence>MEDSVLYSFYFWTYMQPNYYRVIKKATSFSGLEMISHAYGQIAGVEVVGFYLWLITEANIQAFNSEIRTPISRLQNAFNPFEIKKNQVSEWIYKTISKLESLGLVRTFFSPKRSEITFCIIDPLDWKEFKQNKQLKEKLVEAMGKVEYDRNCLAFDQIDNLQFDNALEISANFEVNFTANQSDVWFSFNFEELHKELVKNKLLISLDEKAKTLINGYFEKYKLSLQQITDCIINSSTQENELDFQKLEMMFFQIVKNDTAPILETVSNNKDFFYKNEILDESTKKAITDCHVNFNSEKYLFLLYGKIDESQLQLVRQLRSDYQLLDKVINLVLDFSFWKNNGMWREKYILKIAQSIKINNSQNSYEKTLNNFIRALTLNKKHSLNNIKPVEKTISFTEYFEFIK</sequence>
<feature type="chain" id="PRO_0000210553" description="Uncharacterized protein MG349">
    <location>
        <begin position="1"/>
        <end position="404"/>
    </location>
</feature>
<protein>
    <recommendedName>
        <fullName>Uncharacterized protein MG349</fullName>
    </recommendedName>
</protein>
<keyword id="KW-1185">Reference proteome</keyword>